<dbReference type="EMBL" id="Z73221">
    <property type="protein sequence ID" value="CAA97579.1"/>
    <property type="molecule type" value="Genomic_DNA"/>
</dbReference>
<dbReference type="EMBL" id="X94607">
    <property type="protein sequence ID" value="CAA64296.1"/>
    <property type="molecule type" value="Genomic_DNA"/>
</dbReference>
<dbReference type="EMBL" id="BK006945">
    <property type="protein sequence ID" value="DAA09367.1"/>
    <property type="molecule type" value="Genomic_DNA"/>
</dbReference>
<dbReference type="PIR" id="S61623">
    <property type="entry name" value="S61623"/>
</dbReference>
<dbReference type="SMR" id="Q12110"/>
<dbReference type="BioGRID" id="31324">
    <property type="interactions" value="29"/>
</dbReference>
<dbReference type="DIP" id="DIP-1211N"/>
<dbReference type="FunCoup" id="Q12110">
    <property type="interactions" value="3"/>
</dbReference>
<dbReference type="IntAct" id="Q12110">
    <property type="interactions" value="1"/>
</dbReference>
<dbReference type="MINT" id="Q12110"/>
<dbReference type="STRING" id="4932.YLR049C"/>
<dbReference type="iPTMnet" id="Q12110"/>
<dbReference type="PaxDb" id="4932-YLR049C"/>
<dbReference type="PeptideAtlas" id="Q12110"/>
<dbReference type="EnsemblFungi" id="YLR049C_mRNA">
    <property type="protein sequence ID" value="YLR049C"/>
    <property type="gene ID" value="YLR049C"/>
</dbReference>
<dbReference type="KEGG" id="sce:YLR049C"/>
<dbReference type="AGR" id="SGD:S000004039"/>
<dbReference type="SGD" id="S000004039">
    <property type="gene designation" value="YLR049C"/>
</dbReference>
<dbReference type="VEuPathDB" id="FungiDB:YLR049C"/>
<dbReference type="eggNOG" id="ENOG502RZ58">
    <property type="taxonomic scope" value="Eukaryota"/>
</dbReference>
<dbReference type="HOGENOM" id="CLU_052997_0_0_1"/>
<dbReference type="InParanoid" id="Q12110"/>
<dbReference type="OMA" id="SYYHELD"/>
<dbReference type="OrthoDB" id="4052116at2759"/>
<dbReference type="BioCyc" id="YEAST:G3O-32205-MONOMER"/>
<dbReference type="BioGRID-ORCS" id="850738">
    <property type="hits" value="0 hits in 10 CRISPR screens"/>
</dbReference>
<dbReference type="PRO" id="PR:Q12110"/>
<dbReference type="Proteomes" id="UP000002311">
    <property type="component" value="Chromosome XII"/>
</dbReference>
<dbReference type="RNAct" id="Q12110">
    <property type="molecule type" value="protein"/>
</dbReference>
<comment type="miscellaneous">
    <text evidence="2">Present with 339 molecules/cell in log phase SD medium.</text>
</comment>
<reference key="1">
    <citation type="journal article" date="1997" name="Nature">
        <title>The nucleotide sequence of Saccharomyces cerevisiae chromosome XII.</title>
        <authorList>
            <person name="Johnston M."/>
            <person name="Hillier L.W."/>
            <person name="Riles L."/>
            <person name="Albermann K."/>
            <person name="Andre B."/>
            <person name="Ansorge W."/>
            <person name="Benes V."/>
            <person name="Brueckner M."/>
            <person name="Delius H."/>
            <person name="Dubois E."/>
            <person name="Duesterhoeft A."/>
            <person name="Entian K.-D."/>
            <person name="Floeth M."/>
            <person name="Goffeau A."/>
            <person name="Hebling U."/>
            <person name="Heumann K."/>
            <person name="Heuss-Neitzel D."/>
            <person name="Hilbert H."/>
            <person name="Hilger F."/>
            <person name="Kleine K."/>
            <person name="Koetter P."/>
            <person name="Louis E.J."/>
            <person name="Messenguy F."/>
            <person name="Mewes H.-W."/>
            <person name="Miosga T."/>
            <person name="Moestl D."/>
            <person name="Mueller-Auer S."/>
            <person name="Nentwich U."/>
            <person name="Obermaier B."/>
            <person name="Piravandi E."/>
            <person name="Pohl T.M."/>
            <person name="Portetelle D."/>
            <person name="Purnelle B."/>
            <person name="Rechmann S."/>
            <person name="Rieger M."/>
            <person name="Rinke M."/>
            <person name="Rose M."/>
            <person name="Scharfe M."/>
            <person name="Scherens B."/>
            <person name="Scholler P."/>
            <person name="Schwager C."/>
            <person name="Schwarz S."/>
            <person name="Underwood A.P."/>
            <person name="Urrestarazu L.A."/>
            <person name="Vandenbol M."/>
            <person name="Verhasselt P."/>
            <person name="Vierendeels F."/>
            <person name="Voet M."/>
            <person name="Volckaert G."/>
            <person name="Voss H."/>
            <person name="Wambutt R."/>
            <person name="Wedler E."/>
            <person name="Wedler H."/>
            <person name="Zimmermann F.K."/>
            <person name="Zollner A."/>
            <person name="Hani J."/>
            <person name="Hoheisel J.D."/>
        </authorList>
    </citation>
    <scope>NUCLEOTIDE SEQUENCE [LARGE SCALE GENOMIC DNA]</scope>
    <source>
        <strain>ATCC 204508 / S288c</strain>
    </source>
</reference>
<reference key="2">
    <citation type="journal article" date="2014" name="G3 (Bethesda)">
        <title>The reference genome sequence of Saccharomyces cerevisiae: Then and now.</title>
        <authorList>
            <person name="Engel S.R."/>
            <person name="Dietrich F.S."/>
            <person name="Fisk D.G."/>
            <person name="Binkley G."/>
            <person name="Balakrishnan R."/>
            <person name="Costanzo M.C."/>
            <person name="Dwight S.S."/>
            <person name="Hitz B.C."/>
            <person name="Karra K."/>
            <person name="Nash R.S."/>
            <person name="Weng S."/>
            <person name="Wong E.D."/>
            <person name="Lloyd P."/>
            <person name="Skrzypek M.S."/>
            <person name="Miyasato S.R."/>
            <person name="Simison M."/>
            <person name="Cherry J.M."/>
        </authorList>
    </citation>
    <scope>GENOME REANNOTATION</scope>
    <source>
        <strain>ATCC 204508 / S288c</strain>
    </source>
</reference>
<reference key="3">
    <citation type="journal article" date="2003" name="Nature">
        <title>Global analysis of protein expression in yeast.</title>
        <authorList>
            <person name="Ghaemmaghami S."/>
            <person name="Huh W.-K."/>
            <person name="Bower K."/>
            <person name="Howson R.W."/>
            <person name="Belle A."/>
            <person name="Dephoure N."/>
            <person name="O'Shea E.K."/>
            <person name="Weissman J.S."/>
        </authorList>
    </citation>
    <scope>LEVEL OF PROTEIN EXPRESSION [LARGE SCALE ANALYSIS]</scope>
</reference>
<reference key="4">
    <citation type="journal article" date="2005" name="Mol. Cell. Proteomics">
        <title>Quantitative phosphoproteomics applied to the yeast pheromone signaling pathway.</title>
        <authorList>
            <person name="Gruhler A."/>
            <person name="Olsen J.V."/>
            <person name="Mohammed S."/>
            <person name="Mortensen P."/>
            <person name="Faergeman N.J."/>
            <person name="Mann M."/>
            <person name="Jensen O.N."/>
        </authorList>
    </citation>
    <scope>PHOSPHORYLATION [LARGE SCALE ANALYSIS] AT SER-127</scope>
    <scope>IDENTIFICATION BY MASS SPECTROMETRY [LARGE SCALE ANALYSIS]</scope>
    <source>
        <strain>YAL6B</strain>
    </source>
</reference>
<reference key="5">
    <citation type="journal article" date="2009" name="Science">
        <title>Global analysis of Cdk1 substrate phosphorylation sites provides insights into evolution.</title>
        <authorList>
            <person name="Holt L.J."/>
            <person name="Tuch B.B."/>
            <person name="Villen J."/>
            <person name="Johnson A.D."/>
            <person name="Gygi S.P."/>
            <person name="Morgan D.O."/>
        </authorList>
    </citation>
    <scope>PHOSPHORYLATION [LARGE SCALE ANALYSIS] AT SER-127</scope>
    <scope>IDENTIFICATION BY MASS SPECTROMETRY [LARGE SCALE ANALYSIS]</scope>
</reference>
<keyword id="KW-0597">Phosphoprotein</keyword>
<keyword id="KW-1185">Reference proteome</keyword>
<evidence type="ECO:0000256" key="1">
    <source>
        <dbReference type="SAM" id="MobiDB-lite"/>
    </source>
</evidence>
<evidence type="ECO:0000269" key="2">
    <source>
    </source>
</evidence>
<evidence type="ECO:0007744" key="3">
    <source>
    </source>
</evidence>
<evidence type="ECO:0007744" key="4">
    <source>
    </source>
</evidence>
<sequence length="428" mass="49493">MVNNIMHEYVPPSQRLFHSRHRITRNDLKEEALHSGTTDWTTILDTTIDKDTNLISYAVPIIDNFAIPRANSQGSPVAPSPNHRSTMYSSSSSSASSVFSDGLFTPNNNRNSSGSSSLVIRPQKNLSVDSLIQENKRKINSEKESLSLIANNNDETLCTHTDPSIQNLIKSETKRNILNLKFQNRNLFRRELKLEKFWSNLRSCHTSGDETDLLLVISKHNLYWFGIPNDFRLPIYKRCLYHYSELDEAGFFSQYANNSLYLAIRKCCNNEEQETLSRSIFINLTKNVTWLNSRFDDNKDNKNSYTVTEGKFYQDFPNLYYHLKDKLKLNVIMDFIKPVIRNFMTNALNKHKLDGIGLELLDILIVTTYYGPNKINAFLMDTFILNLLKQCHYKFFVSNISELVIQISKIDCDLVILLEDLRSRIDLD</sequence>
<feature type="chain" id="PRO_0000247204" description="Uncharacterized protein YLR049C">
    <location>
        <begin position="1"/>
        <end position="428"/>
    </location>
</feature>
<feature type="region of interest" description="Disordered" evidence="1">
    <location>
        <begin position="72"/>
        <end position="91"/>
    </location>
</feature>
<feature type="modified residue" description="Phosphoserine" evidence="3 4">
    <location>
        <position position="127"/>
    </location>
</feature>
<protein>
    <recommendedName>
        <fullName>Uncharacterized protein YLR049C</fullName>
    </recommendedName>
</protein>
<proteinExistence type="evidence at protein level"/>
<name>YL049_YEAST</name>
<organism>
    <name type="scientific">Saccharomyces cerevisiae (strain ATCC 204508 / S288c)</name>
    <name type="common">Baker's yeast</name>
    <dbReference type="NCBI Taxonomy" id="559292"/>
    <lineage>
        <taxon>Eukaryota</taxon>
        <taxon>Fungi</taxon>
        <taxon>Dikarya</taxon>
        <taxon>Ascomycota</taxon>
        <taxon>Saccharomycotina</taxon>
        <taxon>Saccharomycetes</taxon>
        <taxon>Saccharomycetales</taxon>
        <taxon>Saccharomycetaceae</taxon>
        <taxon>Saccharomyces</taxon>
    </lineage>
</organism>
<accession>Q12110</accession>
<accession>D6VY51</accession>
<gene>
    <name type="ordered locus">YLR049C</name>
    <name type="ORF">L2121</name>
</gene>